<gene>
    <name evidence="1" type="primary">apt</name>
    <name type="ordered locus">SO_2012</name>
</gene>
<name>APT_SHEON</name>
<dbReference type="EC" id="2.4.2.7" evidence="1"/>
<dbReference type="EMBL" id="AE014299">
    <property type="protein sequence ID" value="AAN55062.2"/>
    <property type="molecule type" value="Genomic_DNA"/>
</dbReference>
<dbReference type="RefSeq" id="NP_717618.2">
    <property type="nucleotide sequence ID" value="NC_004347.2"/>
</dbReference>
<dbReference type="RefSeq" id="WP_011072096.1">
    <property type="nucleotide sequence ID" value="NC_004347.2"/>
</dbReference>
<dbReference type="SMR" id="Q8EFG1"/>
<dbReference type="STRING" id="211586.SO_2012"/>
<dbReference type="PaxDb" id="211586-SO_2012"/>
<dbReference type="KEGG" id="son:SO_2012"/>
<dbReference type="PATRIC" id="fig|211586.12.peg.1931"/>
<dbReference type="eggNOG" id="COG0503">
    <property type="taxonomic scope" value="Bacteria"/>
</dbReference>
<dbReference type="HOGENOM" id="CLU_063339_3_0_6"/>
<dbReference type="OrthoDB" id="9803963at2"/>
<dbReference type="PhylomeDB" id="Q8EFG1"/>
<dbReference type="BioCyc" id="SONE211586:G1GMP-1854-MONOMER"/>
<dbReference type="UniPathway" id="UPA00588">
    <property type="reaction ID" value="UER00646"/>
</dbReference>
<dbReference type="Proteomes" id="UP000008186">
    <property type="component" value="Chromosome"/>
</dbReference>
<dbReference type="GO" id="GO:0005737">
    <property type="term" value="C:cytoplasm"/>
    <property type="evidence" value="ECO:0000318"/>
    <property type="project" value="GO_Central"/>
</dbReference>
<dbReference type="GO" id="GO:0002055">
    <property type="term" value="F:adenine binding"/>
    <property type="evidence" value="ECO:0000318"/>
    <property type="project" value="GO_Central"/>
</dbReference>
<dbReference type="GO" id="GO:0003999">
    <property type="term" value="F:adenine phosphoribosyltransferase activity"/>
    <property type="evidence" value="ECO:0000318"/>
    <property type="project" value="GO_Central"/>
</dbReference>
<dbReference type="GO" id="GO:0016208">
    <property type="term" value="F:AMP binding"/>
    <property type="evidence" value="ECO:0000318"/>
    <property type="project" value="GO_Central"/>
</dbReference>
<dbReference type="GO" id="GO:0006168">
    <property type="term" value="P:adenine salvage"/>
    <property type="evidence" value="ECO:0000318"/>
    <property type="project" value="GO_Central"/>
</dbReference>
<dbReference type="GO" id="GO:0044209">
    <property type="term" value="P:AMP salvage"/>
    <property type="evidence" value="ECO:0000318"/>
    <property type="project" value="GO_Central"/>
</dbReference>
<dbReference type="GO" id="GO:0006166">
    <property type="term" value="P:purine ribonucleoside salvage"/>
    <property type="evidence" value="ECO:0007669"/>
    <property type="project" value="UniProtKB-KW"/>
</dbReference>
<dbReference type="CDD" id="cd06223">
    <property type="entry name" value="PRTases_typeI"/>
    <property type="match status" value="1"/>
</dbReference>
<dbReference type="FunFam" id="3.40.50.2020:FF:000004">
    <property type="entry name" value="Adenine phosphoribosyltransferase"/>
    <property type="match status" value="1"/>
</dbReference>
<dbReference type="Gene3D" id="3.40.50.2020">
    <property type="match status" value="1"/>
</dbReference>
<dbReference type="HAMAP" id="MF_00004">
    <property type="entry name" value="Aden_phosphoribosyltr"/>
    <property type="match status" value="1"/>
</dbReference>
<dbReference type="InterPro" id="IPR005764">
    <property type="entry name" value="Ade_phspho_trans"/>
</dbReference>
<dbReference type="InterPro" id="IPR000836">
    <property type="entry name" value="PRibTrfase_dom"/>
</dbReference>
<dbReference type="InterPro" id="IPR029057">
    <property type="entry name" value="PRTase-like"/>
</dbReference>
<dbReference type="InterPro" id="IPR050054">
    <property type="entry name" value="UPRTase/APRTase"/>
</dbReference>
<dbReference type="NCBIfam" id="TIGR01090">
    <property type="entry name" value="apt"/>
    <property type="match status" value="1"/>
</dbReference>
<dbReference type="NCBIfam" id="NF002632">
    <property type="entry name" value="PRK02304.1-1"/>
    <property type="match status" value="1"/>
</dbReference>
<dbReference type="NCBIfam" id="NF002634">
    <property type="entry name" value="PRK02304.1-3"/>
    <property type="match status" value="1"/>
</dbReference>
<dbReference type="NCBIfam" id="NF002636">
    <property type="entry name" value="PRK02304.1-5"/>
    <property type="match status" value="1"/>
</dbReference>
<dbReference type="PANTHER" id="PTHR32315">
    <property type="entry name" value="ADENINE PHOSPHORIBOSYLTRANSFERASE"/>
    <property type="match status" value="1"/>
</dbReference>
<dbReference type="PANTHER" id="PTHR32315:SF3">
    <property type="entry name" value="ADENINE PHOSPHORIBOSYLTRANSFERASE"/>
    <property type="match status" value="1"/>
</dbReference>
<dbReference type="Pfam" id="PF00156">
    <property type="entry name" value="Pribosyltran"/>
    <property type="match status" value="1"/>
</dbReference>
<dbReference type="SUPFAM" id="SSF53271">
    <property type="entry name" value="PRTase-like"/>
    <property type="match status" value="1"/>
</dbReference>
<dbReference type="PROSITE" id="PS00103">
    <property type="entry name" value="PUR_PYR_PR_TRANSFER"/>
    <property type="match status" value="1"/>
</dbReference>
<keyword id="KW-0963">Cytoplasm</keyword>
<keyword id="KW-0328">Glycosyltransferase</keyword>
<keyword id="KW-0660">Purine salvage</keyword>
<keyword id="KW-1185">Reference proteome</keyword>
<keyword id="KW-0808">Transferase</keyword>
<evidence type="ECO:0000255" key="1">
    <source>
        <dbReference type="HAMAP-Rule" id="MF_00004"/>
    </source>
</evidence>
<sequence>MAMNTETLSLIKQSIKTIPNYPKEGILFRDVTSLLENATAYKATIDLLVEHYRSKGFTKIVGTEARGFLFGAPLALGLGIGFVPVRKPGKLPRATISQSYELEYGHDSLEIHTDAITANDKVLVVDDLLATGGTIEATVKLIRQLGGEVQDAAFVISLPDLGGEARLTALGLELVKLCEFEGE</sequence>
<comment type="function">
    <text evidence="1">Catalyzes a salvage reaction resulting in the formation of AMP, that is energically less costly than de novo synthesis.</text>
</comment>
<comment type="catalytic activity">
    <reaction evidence="1">
        <text>AMP + diphosphate = 5-phospho-alpha-D-ribose 1-diphosphate + adenine</text>
        <dbReference type="Rhea" id="RHEA:16609"/>
        <dbReference type="ChEBI" id="CHEBI:16708"/>
        <dbReference type="ChEBI" id="CHEBI:33019"/>
        <dbReference type="ChEBI" id="CHEBI:58017"/>
        <dbReference type="ChEBI" id="CHEBI:456215"/>
        <dbReference type="EC" id="2.4.2.7"/>
    </reaction>
</comment>
<comment type="pathway">
    <text evidence="1">Purine metabolism; AMP biosynthesis via salvage pathway; AMP from adenine: step 1/1.</text>
</comment>
<comment type="subunit">
    <text evidence="1">Homodimer.</text>
</comment>
<comment type="subcellular location">
    <subcellularLocation>
        <location evidence="1">Cytoplasm</location>
    </subcellularLocation>
</comment>
<comment type="similarity">
    <text evidence="1">Belongs to the purine/pyrimidine phosphoribosyltransferase family.</text>
</comment>
<reference key="1">
    <citation type="journal article" date="2002" name="Nat. Biotechnol.">
        <title>Genome sequence of the dissimilatory metal ion-reducing bacterium Shewanella oneidensis.</title>
        <authorList>
            <person name="Heidelberg J.F."/>
            <person name="Paulsen I.T."/>
            <person name="Nelson K.E."/>
            <person name="Gaidos E.J."/>
            <person name="Nelson W.C."/>
            <person name="Read T.D."/>
            <person name="Eisen J.A."/>
            <person name="Seshadri R."/>
            <person name="Ward N.L."/>
            <person name="Methe B.A."/>
            <person name="Clayton R.A."/>
            <person name="Meyer T."/>
            <person name="Tsapin A."/>
            <person name="Scott J."/>
            <person name="Beanan M.J."/>
            <person name="Brinkac L.M."/>
            <person name="Daugherty S.C."/>
            <person name="DeBoy R.T."/>
            <person name="Dodson R.J."/>
            <person name="Durkin A.S."/>
            <person name="Haft D.H."/>
            <person name="Kolonay J.F."/>
            <person name="Madupu R."/>
            <person name="Peterson J.D."/>
            <person name="Umayam L.A."/>
            <person name="White O."/>
            <person name="Wolf A.M."/>
            <person name="Vamathevan J.J."/>
            <person name="Weidman J.F."/>
            <person name="Impraim M."/>
            <person name="Lee K."/>
            <person name="Berry K.J."/>
            <person name="Lee C."/>
            <person name="Mueller J."/>
            <person name="Khouri H.M."/>
            <person name="Gill J."/>
            <person name="Utterback T.R."/>
            <person name="McDonald L.A."/>
            <person name="Feldblyum T.V."/>
            <person name="Smith H.O."/>
            <person name="Venter J.C."/>
            <person name="Nealson K.H."/>
            <person name="Fraser C.M."/>
        </authorList>
    </citation>
    <scope>NUCLEOTIDE SEQUENCE [LARGE SCALE GENOMIC DNA]</scope>
    <source>
        <strain>ATCC 700550 / JCM 31522 / CIP 106686 / LMG 19005 / NCIMB 14063 / MR-1</strain>
    </source>
</reference>
<protein>
    <recommendedName>
        <fullName evidence="1">Adenine phosphoribosyltransferase</fullName>
        <shortName evidence="1">APRT</shortName>
        <ecNumber evidence="1">2.4.2.7</ecNumber>
    </recommendedName>
</protein>
<proteinExistence type="inferred from homology"/>
<organism>
    <name type="scientific">Shewanella oneidensis (strain ATCC 700550 / JCM 31522 / CIP 106686 / LMG 19005 / NCIMB 14063 / MR-1)</name>
    <dbReference type="NCBI Taxonomy" id="211586"/>
    <lineage>
        <taxon>Bacteria</taxon>
        <taxon>Pseudomonadati</taxon>
        <taxon>Pseudomonadota</taxon>
        <taxon>Gammaproteobacteria</taxon>
        <taxon>Alteromonadales</taxon>
        <taxon>Shewanellaceae</taxon>
        <taxon>Shewanella</taxon>
    </lineage>
</organism>
<accession>Q8EFG1</accession>
<feature type="chain" id="PRO_0000149446" description="Adenine phosphoribosyltransferase">
    <location>
        <begin position="1"/>
        <end position="183"/>
    </location>
</feature>